<organism>
    <name type="scientific">Pectobacterium atrosepticum (strain SCRI 1043 / ATCC BAA-672)</name>
    <name type="common">Erwinia carotovora subsp. atroseptica</name>
    <dbReference type="NCBI Taxonomy" id="218491"/>
    <lineage>
        <taxon>Bacteria</taxon>
        <taxon>Pseudomonadati</taxon>
        <taxon>Pseudomonadota</taxon>
        <taxon>Gammaproteobacteria</taxon>
        <taxon>Enterobacterales</taxon>
        <taxon>Pectobacteriaceae</taxon>
        <taxon>Pectobacterium</taxon>
    </lineage>
</organism>
<keyword id="KW-0002">3D-structure</keyword>
<keyword id="KW-0067">ATP-binding</keyword>
<keyword id="KW-0436">Ligase</keyword>
<keyword id="KW-0479">Metal-binding</keyword>
<keyword id="KW-0547">Nucleotide-binding</keyword>
<keyword id="KW-0671">Queuosine biosynthesis</keyword>
<keyword id="KW-1185">Reference proteome</keyword>
<keyword id="KW-0862">Zinc</keyword>
<name>QUEC_PECAS</name>
<proteinExistence type="evidence at protein level"/>
<evidence type="ECO:0000250" key="1"/>
<evidence type="ECO:0000269" key="2">
    <source ref="2"/>
</evidence>
<evidence type="ECO:0000305" key="3"/>
<evidence type="ECO:0007829" key="4">
    <source>
        <dbReference type="PDB" id="2PG3"/>
    </source>
</evidence>
<sequence>MKRAVVVFSGGQDSTTCLIQALQDYDDVHCITFDYGQRHRAEIEVAQELSQKLGAAAHKVLDVGLLNELATSSLTRDSIPVPDYDANAQGIPNTFVPGRNILFLTLASIYAYQVGAEAVITGVCETDFSGYPDCRDEFVKALNQAIVLGIARDIRFETPLMWLNKAETWALADYYQQLDTVRYHTLTCYNGIKGDGCGQCAACHLRANGLAQYQKDAATVMASLKQKVGLR</sequence>
<comment type="function">
    <text evidence="1">Catalyzes the ATP-dependent conversion of 7-carboxy-7-deazaguanine (CDG) to 7-cyano-7-deazaguanine (preQ(0)).</text>
</comment>
<comment type="catalytic activity">
    <reaction>
        <text>7-carboxy-7-deazaguanine + NH4(+) + ATP = 7-cyano-7-deazaguanine + ADP + phosphate + H2O + H(+)</text>
        <dbReference type="Rhea" id="RHEA:27982"/>
        <dbReference type="ChEBI" id="CHEBI:15377"/>
        <dbReference type="ChEBI" id="CHEBI:15378"/>
        <dbReference type="ChEBI" id="CHEBI:28938"/>
        <dbReference type="ChEBI" id="CHEBI:30616"/>
        <dbReference type="ChEBI" id="CHEBI:43474"/>
        <dbReference type="ChEBI" id="CHEBI:45075"/>
        <dbReference type="ChEBI" id="CHEBI:61036"/>
        <dbReference type="ChEBI" id="CHEBI:456216"/>
        <dbReference type="EC" id="6.3.4.20"/>
    </reaction>
</comment>
<comment type="cofactor">
    <cofactor evidence="2">
        <name>Zn(2+)</name>
        <dbReference type="ChEBI" id="CHEBI:29105"/>
    </cofactor>
    <text evidence="2">Binds 1 zinc ion per subunit.</text>
</comment>
<comment type="pathway">
    <text>Purine metabolism; 7-cyano-7-deazaguanine biosynthesis.</text>
</comment>
<comment type="similarity">
    <text evidence="3">Belongs to the QueC family.</text>
</comment>
<accession>Q6D820</accession>
<protein>
    <recommendedName>
        <fullName>7-cyano-7-deazaguanine synthase</fullName>
        <ecNumber>6.3.4.20</ecNumber>
    </recommendedName>
    <alternativeName>
        <fullName>7-cyano-7-carbaguanine synthase</fullName>
    </alternativeName>
    <alternativeName>
        <fullName>PreQ(0) synthase</fullName>
    </alternativeName>
    <alternativeName>
        <fullName>Queuosine biosynthesis protein QueC</fullName>
    </alternativeName>
</protein>
<dbReference type="EC" id="6.3.4.20"/>
<dbReference type="EMBL" id="BX950851">
    <property type="protein sequence ID" value="CAG74065.1"/>
    <property type="molecule type" value="Genomic_DNA"/>
</dbReference>
<dbReference type="RefSeq" id="WP_011092748.1">
    <property type="nucleotide sequence ID" value="NC_004547.2"/>
</dbReference>
<dbReference type="PDB" id="2PG3">
    <property type="method" value="X-ray"/>
    <property type="resolution" value="2.40 A"/>
    <property type="chains" value="A=1-231"/>
</dbReference>
<dbReference type="PDBsum" id="2PG3"/>
<dbReference type="SMR" id="Q6D820"/>
<dbReference type="STRING" id="218491.ECA1155"/>
<dbReference type="DNASU" id="2885761"/>
<dbReference type="GeneID" id="57207969"/>
<dbReference type="KEGG" id="eca:ECA1155"/>
<dbReference type="PATRIC" id="fig|218491.5.peg.1170"/>
<dbReference type="eggNOG" id="COG0603">
    <property type="taxonomic scope" value="Bacteria"/>
</dbReference>
<dbReference type="HOGENOM" id="CLU_081854_0_0_6"/>
<dbReference type="OrthoDB" id="9789567at2"/>
<dbReference type="UniPathway" id="UPA00391"/>
<dbReference type="EvolutionaryTrace" id="Q6D820"/>
<dbReference type="Proteomes" id="UP000007966">
    <property type="component" value="Chromosome"/>
</dbReference>
<dbReference type="GO" id="GO:0005524">
    <property type="term" value="F:ATP binding"/>
    <property type="evidence" value="ECO:0007669"/>
    <property type="project" value="UniProtKB-UniRule"/>
</dbReference>
<dbReference type="GO" id="GO:0016879">
    <property type="term" value="F:ligase activity, forming carbon-nitrogen bonds"/>
    <property type="evidence" value="ECO:0007669"/>
    <property type="project" value="UniProtKB-UniRule"/>
</dbReference>
<dbReference type="GO" id="GO:0008270">
    <property type="term" value="F:zinc ion binding"/>
    <property type="evidence" value="ECO:0007669"/>
    <property type="project" value="UniProtKB-UniRule"/>
</dbReference>
<dbReference type="GO" id="GO:0008616">
    <property type="term" value="P:queuosine biosynthetic process"/>
    <property type="evidence" value="ECO:0007669"/>
    <property type="project" value="UniProtKB-UniRule"/>
</dbReference>
<dbReference type="CDD" id="cd01995">
    <property type="entry name" value="QueC-like"/>
    <property type="match status" value="1"/>
</dbReference>
<dbReference type="FunFam" id="3.40.50.620:FF:000017">
    <property type="entry name" value="7-cyano-7-deazaguanine synthase"/>
    <property type="match status" value="1"/>
</dbReference>
<dbReference type="Gene3D" id="3.40.50.620">
    <property type="entry name" value="HUPs"/>
    <property type="match status" value="1"/>
</dbReference>
<dbReference type="HAMAP" id="MF_01633">
    <property type="entry name" value="QueC"/>
    <property type="match status" value="1"/>
</dbReference>
<dbReference type="InterPro" id="IPR018317">
    <property type="entry name" value="QueC"/>
</dbReference>
<dbReference type="InterPro" id="IPR014729">
    <property type="entry name" value="Rossmann-like_a/b/a_fold"/>
</dbReference>
<dbReference type="NCBIfam" id="TIGR00364">
    <property type="entry name" value="7-cyano-7-deazaguanine synthase QueC"/>
    <property type="match status" value="1"/>
</dbReference>
<dbReference type="NCBIfam" id="NF008317">
    <property type="entry name" value="PRK11106.1"/>
    <property type="match status" value="1"/>
</dbReference>
<dbReference type="PANTHER" id="PTHR42914">
    <property type="entry name" value="7-CYANO-7-DEAZAGUANINE SYNTHASE"/>
    <property type="match status" value="1"/>
</dbReference>
<dbReference type="PANTHER" id="PTHR42914:SF1">
    <property type="entry name" value="7-CYANO-7-DEAZAGUANINE SYNTHASE"/>
    <property type="match status" value="1"/>
</dbReference>
<dbReference type="Pfam" id="PF06508">
    <property type="entry name" value="QueC"/>
    <property type="match status" value="1"/>
</dbReference>
<dbReference type="PIRSF" id="PIRSF006293">
    <property type="entry name" value="ExsB"/>
    <property type="match status" value="1"/>
</dbReference>
<dbReference type="SUPFAM" id="SSF52402">
    <property type="entry name" value="Adenine nucleotide alpha hydrolases-like"/>
    <property type="match status" value="1"/>
</dbReference>
<reference key="1">
    <citation type="journal article" date="2004" name="Proc. Natl. Acad. Sci. U.S.A.">
        <title>Genome sequence of the enterobacterial phytopathogen Erwinia carotovora subsp. atroseptica and characterization of virulence factors.</title>
        <authorList>
            <person name="Bell K.S."/>
            <person name="Sebaihia M."/>
            <person name="Pritchard L."/>
            <person name="Holden M.T.G."/>
            <person name="Hyman L.J."/>
            <person name="Holeva M.C."/>
            <person name="Thomson N.R."/>
            <person name="Bentley S.D."/>
            <person name="Churcher L.J.C."/>
            <person name="Mungall K."/>
            <person name="Atkin R."/>
            <person name="Bason N."/>
            <person name="Brooks K."/>
            <person name="Chillingworth T."/>
            <person name="Clark K."/>
            <person name="Doggett J."/>
            <person name="Fraser A."/>
            <person name="Hance Z."/>
            <person name="Hauser H."/>
            <person name="Jagels K."/>
            <person name="Moule S."/>
            <person name="Norbertczak H."/>
            <person name="Ormond D."/>
            <person name="Price C."/>
            <person name="Quail M.A."/>
            <person name="Sanders M."/>
            <person name="Walker D."/>
            <person name="Whitehead S."/>
            <person name="Salmond G.P.C."/>
            <person name="Birch P.R.J."/>
            <person name="Parkhill J."/>
            <person name="Toth I.K."/>
        </authorList>
    </citation>
    <scope>NUCLEOTIDE SEQUENCE [LARGE SCALE GENOMIC DNA]</scope>
    <source>
        <strain>SCRI 1043 / ATCC BAA-672</strain>
    </source>
</reference>
<reference key="2">
    <citation type="submission" date="2009-02" db="PDB data bank">
        <title>Crystal structure of hypothetical protein (yp_049261.1) from Erwinia carotovora subsp. atroseptica scri1043 at 2.40 A resolution.</title>
        <authorList>
            <consortium name="Joint center for structural genomics (JCSG)"/>
        </authorList>
    </citation>
    <scope>X-RAY CRYSTALLOGRAPHY (2.4 ANGSTROMS) IN COMPLEX WITH ZINC ION</scope>
    <scope>COFACTOR</scope>
</reference>
<gene>
    <name type="primary">queC</name>
    <name type="ordered locus">ECA1155</name>
</gene>
<feature type="chain" id="PRO_0000246839" description="7-cyano-7-deazaguanine synthase">
    <location>
        <begin position="1"/>
        <end position="231"/>
    </location>
</feature>
<feature type="binding site" evidence="1">
    <location>
        <begin position="8"/>
        <end position="18"/>
    </location>
    <ligand>
        <name>ATP</name>
        <dbReference type="ChEBI" id="CHEBI:30616"/>
    </ligand>
</feature>
<feature type="binding site" evidence="2">
    <location>
        <position position="188"/>
    </location>
    <ligand>
        <name>Zn(2+)</name>
        <dbReference type="ChEBI" id="CHEBI:29105"/>
    </ligand>
</feature>
<feature type="binding site" evidence="2">
    <location>
        <position position="197"/>
    </location>
    <ligand>
        <name>Zn(2+)</name>
        <dbReference type="ChEBI" id="CHEBI:29105"/>
    </ligand>
</feature>
<feature type="binding site" evidence="2">
    <location>
        <position position="200"/>
    </location>
    <ligand>
        <name>Zn(2+)</name>
        <dbReference type="ChEBI" id="CHEBI:29105"/>
    </ligand>
</feature>
<feature type="binding site" evidence="2">
    <location>
        <position position="203"/>
    </location>
    <ligand>
        <name>Zn(2+)</name>
        <dbReference type="ChEBI" id="CHEBI:29105"/>
    </ligand>
</feature>
<feature type="strand" evidence="4">
    <location>
        <begin position="3"/>
        <end position="7"/>
    </location>
</feature>
<feature type="helix" evidence="4">
    <location>
        <begin position="12"/>
        <end position="24"/>
    </location>
</feature>
<feature type="strand" evidence="4">
    <location>
        <begin position="26"/>
        <end position="38"/>
    </location>
</feature>
<feature type="helix" evidence="4">
    <location>
        <begin position="40"/>
        <end position="53"/>
    </location>
</feature>
<feature type="strand" evidence="4">
    <location>
        <begin position="56"/>
        <end position="62"/>
    </location>
</feature>
<feature type="helix" evidence="4">
    <location>
        <begin position="65"/>
        <end position="68"/>
    </location>
</feature>
<feature type="helix" evidence="4">
    <location>
        <begin position="71"/>
        <end position="76"/>
    </location>
</feature>
<feature type="helix" evidence="4">
    <location>
        <begin position="99"/>
        <end position="114"/>
    </location>
</feature>
<feature type="strand" evidence="4">
    <location>
        <begin position="117"/>
        <end position="120"/>
    </location>
</feature>
<feature type="strand" evidence="4">
    <location>
        <begin position="127"/>
        <end position="129"/>
    </location>
</feature>
<feature type="helix" evidence="4">
    <location>
        <begin position="132"/>
        <end position="134"/>
    </location>
</feature>
<feature type="helix" evidence="4">
    <location>
        <begin position="136"/>
        <end position="150"/>
    </location>
</feature>
<feature type="strand" evidence="4">
    <location>
        <begin position="155"/>
        <end position="157"/>
    </location>
</feature>
<feature type="turn" evidence="4">
    <location>
        <begin position="159"/>
        <end position="162"/>
    </location>
</feature>
<feature type="helix" evidence="4">
    <location>
        <begin position="165"/>
        <end position="174"/>
    </location>
</feature>
<feature type="helix" evidence="4">
    <location>
        <begin position="178"/>
        <end position="184"/>
    </location>
</feature>
<feature type="turn" evidence="4">
    <location>
        <begin position="194"/>
        <end position="197"/>
    </location>
</feature>
<feature type="helix" evidence="4">
    <location>
        <begin position="201"/>
        <end position="215"/>
    </location>
</feature>
<feature type="helix" evidence="4">
    <location>
        <begin position="217"/>
        <end position="228"/>
    </location>
</feature>